<sequence>MPKKNEAPASFETALGELEQIVNRLESGDLPLEEALSEFERGVQLARQGQSQLQKAEQRVQILLADSEDSPTTPFTPDAE</sequence>
<gene>
    <name evidence="1" type="primary">xseB</name>
    <name type="ordered locus">KPK_4310</name>
</gene>
<reference key="1">
    <citation type="journal article" date="2008" name="PLoS Genet.">
        <title>Complete genome sequence of the N2-fixing broad host range endophyte Klebsiella pneumoniae 342 and virulence predictions verified in mice.</title>
        <authorList>
            <person name="Fouts D.E."/>
            <person name="Tyler H.L."/>
            <person name="DeBoy R.T."/>
            <person name="Daugherty S."/>
            <person name="Ren Q."/>
            <person name="Badger J.H."/>
            <person name="Durkin A.S."/>
            <person name="Huot H."/>
            <person name="Shrivastava S."/>
            <person name="Kothari S."/>
            <person name="Dodson R.J."/>
            <person name="Mohamoud Y."/>
            <person name="Khouri H."/>
            <person name="Roesch L.F.W."/>
            <person name="Krogfelt K.A."/>
            <person name="Struve C."/>
            <person name="Triplett E.W."/>
            <person name="Methe B.A."/>
        </authorList>
    </citation>
    <scope>NUCLEOTIDE SEQUENCE [LARGE SCALE GENOMIC DNA]</scope>
    <source>
        <strain>342</strain>
    </source>
</reference>
<organism>
    <name type="scientific">Klebsiella pneumoniae (strain 342)</name>
    <dbReference type="NCBI Taxonomy" id="507522"/>
    <lineage>
        <taxon>Bacteria</taxon>
        <taxon>Pseudomonadati</taxon>
        <taxon>Pseudomonadota</taxon>
        <taxon>Gammaproteobacteria</taxon>
        <taxon>Enterobacterales</taxon>
        <taxon>Enterobacteriaceae</taxon>
        <taxon>Klebsiella/Raoultella group</taxon>
        <taxon>Klebsiella</taxon>
        <taxon>Klebsiella pneumoniae complex</taxon>
    </lineage>
</organism>
<feature type="chain" id="PRO_1000119933" description="Exodeoxyribonuclease 7 small subunit">
    <location>
        <begin position="1"/>
        <end position="80"/>
    </location>
</feature>
<name>EX7S_KLEP3</name>
<comment type="function">
    <text evidence="1">Bidirectionally degrades single-stranded DNA into large acid-insoluble oligonucleotides, which are then degraded further into small acid-soluble oligonucleotides.</text>
</comment>
<comment type="catalytic activity">
    <reaction evidence="1">
        <text>Exonucleolytic cleavage in either 5'- to 3'- or 3'- to 5'-direction to yield nucleoside 5'-phosphates.</text>
        <dbReference type="EC" id="3.1.11.6"/>
    </reaction>
</comment>
<comment type="subunit">
    <text evidence="1">Heterooligomer composed of large and small subunits.</text>
</comment>
<comment type="subcellular location">
    <subcellularLocation>
        <location evidence="1">Cytoplasm</location>
    </subcellularLocation>
</comment>
<comment type="similarity">
    <text evidence="1">Belongs to the XseB family.</text>
</comment>
<keyword id="KW-0963">Cytoplasm</keyword>
<keyword id="KW-0269">Exonuclease</keyword>
<keyword id="KW-0378">Hydrolase</keyword>
<keyword id="KW-0540">Nuclease</keyword>
<dbReference type="EC" id="3.1.11.6" evidence="1"/>
<dbReference type="EMBL" id="CP000964">
    <property type="protein sequence ID" value="ACI08092.1"/>
    <property type="molecule type" value="Genomic_DNA"/>
</dbReference>
<dbReference type="SMR" id="B5Y0W9"/>
<dbReference type="KEGG" id="kpe:KPK_4310"/>
<dbReference type="HOGENOM" id="CLU_145918_3_3_6"/>
<dbReference type="Proteomes" id="UP000001734">
    <property type="component" value="Chromosome"/>
</dbReference>
<dbReference type="GO" id="GO:0005829">
    <property type="term" value="C:cytosol"/>
    <property type="evidence" value="ECO:0007669"/>
    <property type="project" value="TreeGrafter"/>
</dbReference>
<dbReference type="GO" id="GO:0009318">
    <property type="term" value="C:exodeoxyribonuclease VII complex"/>
    <property type="evidence" value="ECO:0007669"/>
    <property type="project" value="InterPro"/>
</dbReference>
<dbReference type="GO" id="GO:0008855">
    <property type="term" value="F:exodeoxyribonuclease VII activity"/>
    <property type="evidence" value="ECO:0007669"/>
    <property type="project" value="UniProtKB-UniRule"/>
</dbReference>
<dbReference type="GO" id="GO:0006308">
    <property type="term" value="P:DNA catabolic process"/>
    <property type="evidence" value="ECO:0007669"/>
    <property type="project" value="UniProtKB-UniRule"/>
</dbReference>
<dbReference type="FunFam" id="1.10.287.1040:FF:000001">
    <property type="entry name" value="Exodeoxyribonuclease 7 small subunit"/>
    <property type="match status" value="1"/>
</dbReference>
<dbReference type="Gene3D" id="1.10.287.1040">
    <property type="entry name" value="Exonuclease VII, small subunit"/>
    <property type="match status" value="1"/>
</dbReference>
<dbReference type="HAMAP" id="MF_00337">
    <property type="entry name" value="Exonuc_7_S"/>
    <property type="match status" value="1"/>
</dbReference>
<dbReference type="InterPro" id="IPR003761">
    <property type="entry name" value="Exonuc_VII_S"/>
</dbReference>
<dbReference type="InterPro" id="IPR037004">
    <property type="entry name" value="Exonuc_VII_ssu_sf"/>
</dbReference>
<dbReference type="NCBIfam" id="NF002137">
    <property type="entry name" value="PRK00977.1-1"/>
    <property type="match status" value="1"/>
</dbReference>
<dbReference type="NCBIfam" id="NF002140">
    <property type="entry name" value="PRK00977.1-4"/>
    <property type="match status" value="1"/>
</dbReference>
<dbReference type="NCBIfam" id="TIGR01280">
    <property type="entry name" value="xseB"/>
    <property type="match status" value="1"/>
</dbReference>
<dbReference type="PANTHER" id="PTHR34137">
    <property type="entry name" value="EXODEOXYRIBONUCLEASE 7 SMALL SUBUNIT"/>
    <property type="match status" value="1"/>
</dbReference>
<dbReference type="PANTHER" id="PTHR34137:SF1">
    <property type="entry name" value="EXODEOXYRIBONUCLEASE 7 SMALL SUBUNIT"/>
    <property type="match status" value="1"/>
</dbReference>
<dbReference type="Pfam" id="PF02609">
    <property type="entry name" value="Exonuc_VII_S"/>
    <property type="match status" value="1"/>
</dbReference>
<dbReference type="PIRSF" id="PIRSF006488">
    <property type="entry name" value="Exonuc_VII_S"/>
    <property type="match status" value="1"/>
</dbReference>
<dbReference type="SUPFAM" id="SSF116842">
    <property type="entry name" value="XseB-like"/>
    <property type="match status" value="1"/>
</dbReference>
<evidence type="ECO:0000255" key="1">
    <source>
        <dbReference type="HAMAP-Rule" id="MF_00337"/>
    </source>
</evidence>
<accession>B5Y0W9</accession>
<proteinExistence type="inferred from homology"/>
<protein>
    <recommendedName>
        <fullName evidence="1">Exodeoxyribonuclease 7 small subunit</fullName>
        <ecNumber evidence="1">3.1.11.6</ecNumber>
    </recommendedName>
    <alternativeName>
        <fullName evidence="1">Exodeoxyribonuclease VII small subunit</fullName>
        <shortName evidence="1">Exonuclease VII small subunit</shortName>
    </alternativeName>
</protein>